<keyword id="KW-0067">ATP-binding</keyword>
<keyword id="KW-0418">Kinase</keyword>
<keyword id="KW-0441">Lipid A biosynthesis</keyword>
<keyword id="KW-0444">Lipid biosynthesis</keyword>
<keyword id="KW-0443">Lipid metabolism</keyword>
<keyword id="KW-0547">Nucleotide-binding</keyword>
<keyword id="KW-1185">Reference proteome</keyword>
<keyword id="KW-0808">Transferase</keyword>
<accession>B4ET31</accession>
<protein>
    <recommendedName>
        <fullName evidence="1">Tetraacyldisaccharide 4'-kinase</fullName>
        <ecNumber evidence="1">2.7.1.130</ecNumber>
    </recommendedName>
    <alternativeName>
        <fullName evidence="1">Lipid A 4'-kinase</fullName>
    </alternativeName>
</protein>
<dbReference type="EC" id="2.7.1.130" evidence="1"/>
<dbReference type="EMBL" id="AM942759">
    <property type="protein sequence ID" value="CAR41683.1"/>
    <property type="molecule type" value="Genomic_DNA"/>
</dbReference>
<dbReference type="RefSeq" id="WP_012367713.1">
    <property type="nucleotide sequence ID" value="NC_010554.1"/>
</dbReference>
<dbReference type="SMR" id="B4ET31"/>
<dbReference type="EnsemblBacteria" id="CAR41683">
    <property type="protein sequence ID" value="CAR41683"/>
    <property type="gene ID" value="PMI0719"/>
</dbReference>
<dbReference type="GeneID" id="6802153"/>
<dbReference type="KEGG" id="pmr:PMI0719"/>
<dbReference type="eggNOG" id="COG1663">
    <property type="taxonomic scope" value="Bacteria"/>
</dbReference>
<dbReference type="HOGENOM" id="CLU_038816_2_0_6"/>
<dbReference type="UniPathway" id="UPA00359">
    <property type="reaction ID" value="UER00482"/>
</dbReference>
<dbReference type="Proteomes" id="UP000008319">
    <property type="component" value="Chromosome"/>
</dbReference>
<dbReference type="GO" id="GO:0005886">
    <property type="term" value="C:plasma membrane"/>
    <property type="evidence" value="ECO:0007669"/>
    <property type="project" value="TreeGrafter"/>
</dbReference>
<dbReference type="GO" id="GO:0005524">
    <property type="term" value="F:ATP binding"/>
    <property type="evidence" value="ECO:0007669"/>
    <property type="project" value="UniProtKB-UniRule"/>
</dbReference>
<dbReference type="GO" id="GO:0009029">
    <property type="term" value="F:tetraacyldisaccharide 4'-kinase activity"/>
    <property type="evidence" value="ECO:0007669"/>
    <property type="project" value="UniProtKB-UniRule"/>
</dbReference>
<dbReference type="GO" id="GO:0009245">
    <property type="term" value="P:lipid A biosynthetic process"/>
    <property type="evidence" value="ECO:0007669"/>
    <property type="project" value="UniProtKB-UniRule"/>
</dbReference>
<dbReference type="GO" id="GO:0009244">
    <property type="term" value="P:lipopolysaccharide core region biosynthetic process"/>
    <property type="evidence" value="ECO:0007669"/>
    <property type="project" value="TreeGrafter"/>
</dbReference>
<dbReference type="HAMAP" id="MF_00409">
    <property type="entry name" value="LpxK"/>
    <property type="match status" value="1"/>
</dbReference>
<dbReference type="InterPro" id="IPR003758">
    <property type="entry name" value="LpxK"/>
</dbReference>
<dbReference type="InterPro" id="IPR027417">
    <property type="entry name" value="P-loop_NTPase"/>
</dbReference>
<dbReference type="NCBIfam" id="TIGR00682">
    <property type="entry name" value="lpxK"/>
    <property type="match status" value="1"/>
</dbReference>
<dbReference type="PANTHER" id="PTHR42724">
    <property type="entry name" value="TETRAACYLDISACCHARIDE 4'-KINASE"/>
    <property type="match status" value="1"/>
</dbReference>
<dbReference type="PANTHER" id="PTHR42724:SF1">
    <property type="entry name" value="TETRAACYLDISACCHARIDE 4'-KINASE, MITOCHONDRIAL-RELATED"/>
    <property type="match status" value="1"/>
</dbReference>
<dbReference type="Pfam" id="PF02606">
    <property type="entry name" value="LpxK"/>
    <property type="match status" value="1"/>
</dbReference>
<dbReference type="SUPFAM" id="SSF52540">
    <property type="entry name" value="P-loop containing nucleoside triphosphate hydrolases"/>
    <property type="match status" value="1"/>
</dbReference>
<evidence type="ECO:0000255" key="1">
    <source>
        <dbReference type="HAMAP-Rule" id="MF_00409"/>
    </source>
</evidence>
<name>LPXK_PROMH</name>
<sequence length="333" mass="37023">MIERIWSGKSWCYLLLLPFSWLYGAISLFRRFAYKQGWLSSWKSPVPVVVVGNLTAGGNGKTPVVIWLVEQLKAQGFKPAVVSRGYGGKSDQYPLLLSPETQPAVAGDEPVLIYHRTGVPVAVAPSRSDAVKALLAQYDLDIIITDDGLQHYALQRDYEIVVIDGQRRFGNGWWLPAGPMRERAHRLDSVNAVIVNGGDCQANEIAMSLEGEIAVNLKTGEKKAITELGNAVAMAGIGHPPRFFNSLQDKGVKLIATKAFNDHSEYTLQELQILTPHQEPLIMTEKDAVKCQHFAQNNWWYLPVSAVLEDLSVLNQVSQLVTTRKKLVYDLKQ</sequence>
<gene>
    <name evidence="1" type="primary">lpxK</name>
    <name type="ordered locus">PMI0719</name>
</gene>
<reference key="1">
    <citation type="journal article" date="2008" name="J. Bacteriol.">
        <title>Complete genome sequence of uropathogenic Proteus mirabilis, a master of both adherence and motility.</title>
        <authorList>
            <person name="Pearson M.M."/>
            <person name="Sebaihia M."/>
            <person name="Churcher C."/>
            <person name="Quail M.A."/>
            <person name="Seshasayee A.S."/>
            <person name="Luscombe N.M."/>
            <person name="Abdellah Z."/>
            <person name="Arrosmith C."/>
            <person name="Atkin B."/>
            <person name="Chillingworth T."/>
            <person name="Hauser H."/>
            <person name="Jagels K."/>
            <person name="Moule S."/>
            <person name="Mungall K."/>
            <person name="Norbertczak H."/>
            <person name="Rabbinowitsch E."/>
            <person name="Walker D."/>
            <person name="Whithead S."/>
            <person name="Thomson N.R."/>
            <person name="Rather P.N."/>
            <person name="Parkhill J."/>
            <person name="Mobley H.L.T."/>
        </authorList>
    </citation>
    <scope>NUCLEOTIDE SEQUENCE [LARGE SCALE GENOMIC DNA]</scope>
    <source>
        <strain>HI4320</strain>
    </source>
</reference>
<proteinExistence type="inferred from homology"/>
<organism>
    <name type="scientific">Proteus mirabilis (strain HI4320)</name>
    <dbReference type="NCBI Taxonomy" id="529507"/>
    <lineage>
        <taxon>Bacteria</taxon>
        <taxon>Pseudomonadati</taxon>
        <taxon>Pseudomonadota</taxon>
        <taxon>Gammaproteobacteria</taxon>
        <taxon>Enterobacterales</taxon>
        <taxon>Morganellaceae</taxon>
        <taxon>Proteus</taxon>
    </lineage>
</organism>
<comment type="function">
    <text evidence="1">Transfers the gamma-phosphate of ATP to the 4'-position of a tetraacyldisaccharide 1-phosphate intermediate (termed DS-1-P) to form tetraacyldisaccharide 1,4'-bis-phosphate (lipid IVA).</text>
</comment>
<comment type="catalytic activity">
    <reaction evidence="1">
        <text>a lipid A disaccharide + ATP = a lipid IVA + ADP + H(+)</text>
        <dbReference type="Rhea" id="RHEA:67840"/>
        <dbReference type="ChEBI" id="CHEBI:15378"/>
        <dbReference type="ChEBI" id="CHEBI:30616"/>
        <dbReference type="ChEBI" id="CHEBI:176343"/>
        <dbReference type="ChEBI" id="CHEBI:176425"/>
        <dbReference type="ChEBI" id="CHEBI:456216"/>
        <dbReference type="EC" id="2.7.1.130"/>
    </reaction>
</comment>
<comment type="pathway">
    <text evidence="1">Glycolipid biosynthesis; lipid IV(A) biosynthesis; lipid IV(A) from (3R)-3-hydroxytetradecanoyl-[acyl-carrier-protein] and UDP-N-acetyl-alpha-D-glucosamine: step 6/6.</text>
</comment>
<comment type="similarity">
    <text evidence="1">Belongs to the LpxK family.</text>
</comment>
<feature type="chain" id="PRO_1000123729" description="Tetraacyldisaccharide 4'-kinase">
    <location>
        <begin position="1"/>
        <end position="333"/>
    </location>
</feature>
<feature type="binding site" evidence="1">
    <location>
        <begin position="55"/>
        <end position="62"/>
    </location>
    <ligand>
        <name>ATP</name>
        <dbReference type="ChEBI" id="CHEBI:30616"/>
    </ligand>
</feature>